<reference key="1">
    <citation type="journal article" date="2000" name="Planta">
        <title>Isoforms of chalcone synthase in Daucus carota L. and their differential expression in organs from the European wild carrot and in ultraviolet-A-irradiated cell cultures.</title>
        <authorList>
            <person name="Hirner A.A."/>
            <person name="Seitz H.U."/>
        </authorList>
    </citation>
    <scope>NUCLEOTIDE SEQUENCE [MRNA]</scope>
</reference>
<protein>
    <recommendedName>
        <fullName>Chalcone synthase 1</fullName>
        <ecNumber>2.3.1.74</ecNumber>
    </recommendedName>
    <alternativeName>
        <fullName>DcCHS1</fullName>
    </alternativeName>
    <alternativeName>
        <fullName>Naringenin-chalcone synthase 1</fullName>
    </alternativeName>
</protein>
<evidence type="ECO:0000255" key="1">
    <source>
        <dbReference type="PROSITE-ProRule" id="PRU10023"/>
    </source>
</evidence>
<evidence type="ECO:0000305" key="2"/>
<feature type="chain" id="PRO_0000215970" description="Chalcone synthase 1">
    <location>
        <begin position="1"/>
        <end position="389"/>
    </location>
</feature>
<feature type="active site" evidence="1">
    <location>
        <position position="164"/>
    </location>
</feature>
<name>CHS1_DAUCA</name>
<comment type="function">
    <text>The primary product of this enzyme is 4,2',4',6'-tetrahydroxychalcone (also termed naringenin-chalcone or chalcone) which can under specific conditions spontaneously isomerize into naringenin.</text>
</comment>
<comment type="catalytic activity">
    <reaction evidence="1">
        <text>(E)-4-coumaroyl-CoA + 3 malonyl-CoA + 3 H(+) = 2',4,4',6'-tetrahydroxychalcone + 3 CO2 + 4 CoA</text>
        <dbReference type="Rhea" id="RHEA:11128"/>
        <dbReference type="ChEBI" id="CHEBI:15378"/>
        <dbReference type="ChEBI" id="CHEBI:15413"/>
        <dbReference type="ChEBI" id="CHEBI:16526"/>
        <dbReference type="ChEBI" id="CHEBI:57287"/>
        <dbReference type="ChEBI" id="CHEBI:57384"/>
        <dbReference type="ChEBI" id="CHEBI:85008"/>
        <dbReference type="EC" id="2.3.1.74"/>
    </reaction>
</comment>
<comment type="pathway">
    <text>Secondary metabolite biosynthesis; flavonoid biosynthesis.</text>
</comment>
<comment type="similarity">
    <text evidence="2">Belongs to the thiolase-like superfamily. Chalcone/stilbene synthases family.</text>
</comment>
<sequence>MVTVNEFRKAQRAEGPATVLAIGTATPPNCVDQSAYADYYFRITNSEDKPELKEKFRRMCEKSMINTRYMHLTEDLLKQNPSFCEYMASSLDARQDIVVNEVPKLGKEAALRAIKEWGQPKSKITHLIFCTTSGVDMPGADFRLTKLLGLRPSVKRFMMYQQGCFAGGTVLRLAKDLAENNKNARVLVVCSEITVITFRGPNDTHLDSLVGQALFGDGAGAVIVGSDPVIGIEKPLFEIVSAAQTILPDSDGAIDGHLREVGLTFHLLKDVPGLISKNIRKSLVEAFKPLGISDWNSIFWIAHPGGPAILDQVETELSLKPEKLKSTRQVLRDYGNMSSACVLFILDEMRKASAKDGHRTTGEGLDWGVLFGFGPGLTVETVVLHSVPP</sequence>
<gene>
    <name type="primary">CHS1</name>
</gene>
<keyword id="KW-0012">Acyltransferase</keyword>
<keyword id="KW-0284">Flavonoid biosynthesis</keyword>
<keyword id="KW-0808">Transferase</keyword>
<dbReference type="EC" id="2.3.1.74"/>
<dbReference type="EMBL" id="AJ006779">
    <property type="protein sequence ID" value="CAA07244.1"/>
    <property type="molecule type" value="mRNA"/>
</dbReference>
<dbReference type="SMR" id="Q9ZS41"/>
<dbReference type="UniPathway" id="UPA00154"/>
<dbReference type="GO" id="GO:0016210">
    <property type="term" value="F:naringenin-chalcone synthase activity"/>
    <property type="evidence" value="ECO:0007669"/>
    <property type="project" value="UniProtKB-EC"/>
</dbReference>
<dbReference type="GO" id="GO:0009813">
    <property type="term" value="P:flavonoid biosynthetic process"/>
    <property type="evidence" value="ECO:0007669"/>
    <property type="project" value="UniProtKB-UniPathway"/>
</dbReference>
<dbReference type="GO" id="GO:0030639">
    <property type="term" value="P:polyketide biosynthetic process"/>
    <property type="evidence" value="ECO:0007669"/>
    <property type="project" value="TreeGrafter"/>
</dbReference>
<dbReference type="CDD" id="cd00831">
    <property type="entry name" value="CHS_like"/>
    <property type="match status" value="1"/>
</dbReference>
<dbReference type="FunFam" id="3.40.47.10:FF:000014">
    <property type="entry name" value="Chalcone synthase 1"/>
    <property type="match status" value="1"/>
</dbReference>
<dbReference type="FunFam" id="3.40.47.10:FF:000025">
    <property type="entry name" value="Chalcone synthase 2"/>
    <property type="match status" value="1"/>
</dbReference>
<dbReference type="Gene3D" id="3.40.47.10">
    <property type="match status" value="2"/>
</dbReference>
<dbReference type="InterPro" id="IPR012328">
    <property type="entry name" value="Chalcone/stilbene_synt_C"/>
</dbReference>
<dbReference type="InterPro" id="IPR001099">
    <property type="entry name" value="Chalcone/stilbene_synt_N"/>
</dbReference>
<dbReference type="InterPro" id="IPR018088">
    <property type="entry name" value="Chalcone/stilbene_synthase_AS"/>
</dbReference>
<dbReference type="InterPro" id="IPR011141">
    <property type="entry name" value="Polyketide_synthase_type-III"/>
</dbReference>
<dbReference type="InterPro" id="IPR016039">
    <property type="entry name" value="Thiolase-like"/>
</dbReference>
<dbReference type="PANTHER" id="PTHR11877:SF80">
    <property type="entry name" value="CHALCONE SYNTHASE 1"/>
    <property type="match status" value="1"/>
</dbReference>
<dbReference type="PANTHER" id="PTHR11877">
    <property type="entry name" value="HYDROXYMETHYLGLUTARYL-COA SYNTHASE"/>
    <property type="match status" value="1"/>
</dbReference>
<dbReference type="Pfam" id="PF02797">
    <property type="entry name" value="Chal_sti_synt_C"/>
    <property type="match status" value="1"/>
</dbReference>
<dbReference type="Pfam" id="PF00195">
    <property type="entry name" value="Chal_sti_synt_N"/>
    <property type="match status" value="1"/>
</dbReference>
<dbReference type="PIRSF" id="PIRSF000451">
    <property type="entry name" value="PKS_III"/>
    <property type="match status" value="1"/>
</dbReference>
<dbReference type="SUPFAM" id="SSF53901">
    <property type="entry name" value="Thiolase-like"/>
    <property type="match status" value="2"/>
</dbReference>
<dbReference type="PROSITE" id="PS00441">
    <property type="entry name" value="CHALCONE_SYNTH"/>
    <property type="match status" value="1"/>
</dbReference>
<proteinExistence type="evidence at transcript level"/>
<organism>
    <name type="scientific">Daucus carota</name>
    <name type="common">Wild carrot</name>
    <dbReference type="NCBI Taxonomy" id="4039"/>
    <lineage>
        <taxon>Eukaryota</taxon>
        <taxon>Viridiplantae</taxon>
        <taxon>Streptophyta</taxon>
        <taxon>Embryophyta</taxon>
        <taxon>Tracheophyta</taxon>
        <taxon>Spermatophyta</taxon>
        <taxon>Magnoliopsida</taxon>
        <taxon>eudicotyledons</taxon>
        <taxon>Gunneridae</taxon>
        <taxon>Pentapetalae</taxon>
        <taxon>asterids</taxon>
        <taxon>campanulids</taxon>
        <taxon>Apiales</taxon>
        <taxon>Apiaceae</taxon>
        <taxon>Apioideae</taxon>
        <taxon>Scandiceae</taxon>
        <taxon>Daucinae</taxon>
        <taxon>Daucus</taxon>
        <taxon>Daucus sect. Daucus</taxon>
    </lineage>
</organism>
<accession>Q9ZS41</accession>